<reference key="1">
    <citation type="journal article" date="2005" name="Nucleic Acids Res.">
        <title>The genome sequence of Xanthomonas oryzae pathovar oryzae KACC10331, the bacterial blight pathogen of rice.</title>
        <authorList>
            <person name="Lee B.-M."/>
            <person name="Park Y.-J."/>
            <person name="Park D.-S."/>
            <person name="Kang H.-W."/>
            <person name="Kim J.-G."/>
            <person name="Song E.-S."/>
            <person name="Park I.-C."/>
            <person name="Yoon U.-H."/>
            <person name="Hahn J.-H."/>
            <person name="Koo B.-S."/>
            <person name="Lee G.-B."/>
            <person name="Kim H."/>
            <person name="Park H.-S."/>
            <person name="Yoon K.-O."/>
            <person name="Kim J.-H."/>
            <person name="Jung C.-H."/>
            <person name="Koh N.-H."/>
            <person name="Seo J.-S."/>
            <person name="Go S.-J."/>
        </authorList>
    </citation>
    <scope>NUCLEOTIDE SEQUENCE [LARGE SCALE GENOMIC DNA]</scope>
    <source>
        <strain>KACC10331 / KXO85</strain>
    </source>
</reference>
<accession>Q5H2A4</accession>
<dbReference type="EC" id="3.6.4.-" evidence="1"/>
<dbReference type="EMBL" id="AE013598">
    <property type="protein sequence ID" value="AAW74917.1"/>
    <property type="molecule type" value="Genomic_DNA"/>
</dbReference>
<dbReference type="SMR" id="Q5H2A4"/>
<dbReference type="STRING" id="291331.XOO1663"/>
<dbReference type="KEGG" id="xoo:XOO1663"/>
<dbReference type="HOGENOM" id="CLU_055599_1_0_6"/>
<dbReference type="Proteomes" id="UP000006735">
    <property type="component" value="Chromosome"/>
</dbReference>
<dbReference type="GO" id="GO:0005737">
    <property type="term" value="C:cytoplasm"/>
    <property type="evidence" value="ECO:0007669"/>
    <property type="project" value="UniProtKB-SubCell"/>
</dbReference>
<dbReference type="GO" id="GO:0048476">
    <property type="term" value="C:Holliday junction resolvase complex"/>
    <property type="evidence" value="ECO:0007669"/>
    <property type="project" value="UniProtKB-UniRule"/>
</dbReference>
<dbReference type="GO" id="GO:0005524">
    <property type="term" value="F:ATP binding"/>
    <property type="evidence" value="ECO:0007669"/>
    <property type="project" value="UniProtKB-UniRule"/>
</dbReference>
<dbReference type="GO" id="GO:0016887">
    <property type="term" value="F:ATP hydrolysis activity"/>
    <property type="evidence" value="ECO:0007669"/>
    <property type="project" value="InterPro"/>
</dbReference>
<dbReference type="GO" id="GO:0000400">
    <property type="term" value="F:four-way junction DNA binding"/>
    <property type="evidence" value="ECO:0007669"/>
    <property type="project" value="UniProtKB-UniRule"/>
</dbReference>
<dbReference type="GO" id="GO:0009378">
    <property type="term" value="F:four-way junction helicase activity"/>
    <property type="evidence" value="ECO:0007669"/>
    <property type="project" value="InterPro"/>
</dbReference>
<dbReference type="GO" id="GO:0006310">
    <property type="term" value="P:DNA recombination"/>
    <property type="evidence" value="ECO:0007669"/>
    <property type="project" value="UniProtKB-UniRule"/>
</dbReference>
<dbReference type="GO" id="GO:0006281">
    <property type="term" value="P:DNA repair"/>
    <property type="evidence" value="ECO:0007669"/>
    <property type="project" value="UniProtKB-UniRule"/>
</dbReference>
<dbReference type="CDD" id="cd00009">
    <property type="entry name" value="AAA"/>
    <property type="match status" value="1"/>
</dbReference>
<dbReference type="FunFam" id="3.40.50.300:FF:000073">
    <property type="entry name" value="Holliday junction ATP-dependent DNA helicase RuvB"/>
    <property type="match status" value="1"/>
</dbReference>
<dbReference type="Gene3D" id="1.10.8.60">
    <property type="match status" value="1"/>
</dbReference>
<dbReference type="Gene3D" id="3.40.50.300">
    <property type="entry name" value="P-loop containing nucleotide triphosphate hydrolases"/>
    <property type="match status" value="1"/>
</dbReference>
<dbReference type="Gene3D" id="1.10.10.10">
    <property type="entry name" value="Winged helix-like DNA-binding domain superfamily/Winged helix DNA-binding domain"/>
    <property type="match status" value="1"/>
</dbReference>
<dbReference type="HAMAP" id="MF_00016">
    <property type="entry name" value="DNA_HJ_migration_RuvB"/>
    <property type="match status" value="1"/>
</dbReference>
<dbReference type="InterPro" id="IPR003593">
    <property type="entry name" value="AAA+_ATPase"/>
</dbReference>
<dbReference type="InterPro" id="IPR041445">
    <property type="entry name" value="AAA_lid_4"/>
</dbReference>
<dbReference type="InterPro" id="IPR004605">
    <property type="entry name" value="DNA_helicase_Holl-junc_RuvB"/>
</dbReference>
<dbReference type="InterPro" id="IPR027417">
    <property type="entry name" value="P-loop_NTPase"/>
</dbReference>
<dbReference type="InterPro" id="IPR008824">
    <property type="entry name" value="RuvB-like_N"/>
</dbReference>
<dbReference type="InterPro" id="IPR008823">
    <property type="entry name" value="RuvB_C"/>
</dbReference>
<dbReference type="InterPro" id="IPR036388">
    <property type="entry name" value="WH-like_DNA-bd_sf"/>
</dbReference>
<dbReference type="InterPro" id="IPR036390">
    <property type="entry name" value="WH_DNA-bd_sf"/>
</dbReference>
<dbReference type="NCBIfam" id="NF000868">
    <property type="entry name" value="PRK00080.1"/>
    <property type="match status" value="1"/>
</dbReference>
<dbReference type="NCBIfam" id="TIGR00635">
    <property type="entry name" value="ruvB"/>
    <property type="match status" value="1"/>
</dbReference>
<dbReference type="PANTHER" id="PTHR42848">
    <property type="match status" value="1"/>
</dbReference>
<dbReference type="PANTHER" id="PTHR42848:SF1">
    <property type="entry name" value="HOLLIDAY JUNCTION BRANCH MIGRATION COMPLEX SUBUNIT RUVB"/>
    <property type="match status" value="1"/>
</dbReference>
<dbReference type="Pfam" id="PF17864">
    <property type="entry name" value="AAA_lid_4"/>
    <property type="match status" value="1"/>
</dbReference>
<dbReference type="Pfam" id="PF05491">
    <property type="entry name" value="RuvB_C"/>
    <property type="match status" value="1"/>
</dbReference>
<dbReference type="Pfam" id="PF05496">
    <property type="entry name" value="RuvB_N"/>
    <property type="match status" value="1"/>
</dbReference>
<dbReference type="SMART" id="SM00382">
    <property type="entry name" value="AAA"/>
    <property type="match status" value="1"/>
</dbReference>
<dbReference type="SUPFAM" id="SSF52540">
    <property type="entry name" value="P-loop containing nucleoside triphosphate hydrolases"/>
    <property type="match status" value="1"/>
</dbReference>
<dbReference type="SUPFAM" id="SSF46785">
    <property type="entry name" value="Winged helix' DNA-binding domain"/>
    <property type="match status" value="1"/>
</dbReference>
<feature type="chain" id="PRO_0000235431" description="Holliday junction branch migration complex subunit RuvB">
    <location>
        <begin position="1"/>
        <end position="345"/>
    </location>
</feature>
<feature type="region of interest" description="Large ATPase domain (RuvB-L)" evidence="1">
    <location>
        <begin position="1"/>
        <end position="182"/>
    </location>
</feature>
<feature type="region of interest" description="Small ATPAse domain (RuvB-S)" evidence="1">
    <location>
        <begin position="183"/>
        <end position="253"/>
    </location>
</feature>
<feature type="region of interest" description="Head domain (RuvB-H)" evidence="1">
    <location>
        <begin position="256"/>
        <end position="345"/>
    </location>
</feature>
<feature type="binding site" evidence="1">
    <location>
        <position position="21"/>
    </location>
    <ligand>
        <name>ATP</name>
        <dbReference type="ChEBI" id="CHEBI:30616"/>
    </ligand>
</feature>
<feature type="binding site" evidence="1">
    <location>
        <position position="22"/>
    </location>
    <ligand>
        <name>ATP</name>
        <dbReference type="ChEBI" id="CHEBI:30616"/>
    </ligand>
</feature>
<feature type="binding site" evidence="1">
    <location>
        <position position="63"/>
    </location>
    <ligand>
        <name>ATP</name>
        <dbReference type="ChEBI" id="CHEBI:30616"/>
    </ligand>
</feature>
<feature type="binding site" evidence="1">
    <location>
        <position position="66"/>
    </location>
    <ligand>
        <name>ATP</name>
        <dbReference type="ChEBI" id="CHEBI:30616"/>
    </ligand>
</feature>
<feature type="binding site" evidence="1">
    <location>
        <position position="67"/>
    </location>
    <ligand>
        <name>ATP</name>
        <dbReference type="ChEBI" id="CHEBI:30616"/>
    </ligand>
</feature>
<feature type="binding site" evidence="1">
    <location>
        <position position="67"/>
    </location>
    <ligand>
        <name>Mg(2+)</name>
        <dbReference type="ChEBI" id="CHEBI:18420"/>
    </ligand>
</feature>
<feature type="binding site" evidence="1">
    <location>
        <position position="68"/>
    </location>
    <ligand>
        <name>ATP</name>
        <dbReference type="ChEBI" id="CHEBI:30616"/>
    </ligand>
</feature>
<feature type="binding site" evidence="1">
    <location>
        <begin position="129"/>
        <end position="131"/>
    </location>
    <ligand>
        <name>ATP</name>
        <dbReference type="ChEBI" id="CHEBI:30616"/>
    </ligand>
</feature>
<feature type="binding site" evidence="1">
    <location>
        <position position="172"/>
    </location>
    <ligand>
        <name>ATP</name>
        <dbReference type="ChEBI" id="CHEBI:30616"/>
    </ligand>
</feature>
<feature type="binding site" evidence="1">
    <location>
        <position position="182"/>
    </location>
    <ligand>
        <name>ATP</name>
        <dbReference type="ChEBI" id="CHEBI:30616"/>
    </ligand>
</feature>
<feature type="binding site" evidence="1">
    <location>
        <position position="219"/>
    </location>
    <ligand>
        <name>ATP</name>
        <dbReference type="ChEBI" id="CHEBI:30616"/>
    </ligand>
</feature>
<feature type="binding site" evidence="1">
    <location>
        <position position="292"/>
    </location>
    <ligand>
        <name>DNA</name>
        <dbReference type="ChEBI" id="CHEBI:16991"/>
    </ligand>
</feature>
<feature type="binding site" evidence="1">
    <location>
        <position position="311"/>
    </location>
    <ligand>
        <name>DNA</name>
        <dbReference type="ChEBI" id="CHEBI:16991"/>
    </ligand>
</feature>
<feature type="binding site" evidence="1">
    <location>
        <position position="316"/>
    </location>
    <ligand>
        <name>DNA</name>
        <dbReference type="ChEBI" id="CHEBI:16991"/>
    </ligand>
</feature>
<name>RUVB_XANOR</name>
<evidence type="ECO:0000255" key="1">
    <source>
        <dbReference type="HAMAP-Rule" id="MF_00016"/>
    </source>
</evidence>
<sequence>MDQRIIASSSTREDDAADASIRPKRLADYLGQQPVREQMEIYIQAAKARGEAMDHVLIFGPPGLGKTTLSHVIANELGVSLRVTSGPVIEKAGDLAALLTNLQPHDVLFIDEIHRLSPVVEEVLYPAMEDFQIDIMIGDGPAARSIKIDLPPFTLIGATTRAGLLTAPLRDRFGIVQRLEFYSPQELTRIVIRSAAILGIDCTPEGAAEIARRARGTPRIANRLLRRVRDYAQVKAAGHIDLPVAQAAMQMLKVDPEGFDELDRRMLRTIVEHFDGGPVGVESLAASLSEERGTLEDVIEPYLIQQGFLIRTARGRMVTTKAYLHLGLKPPRDRAPGIGEPGDLF</sequence>
<proteinExistence type="inferred from homology"/>
<organism>
    <name type="scientific">Xanthomonas oryzae pv. oryzae (strain KACC10331 / KXO85)</name>
    <dbReference type="NCBI Taxonomy" id="291331"/>
    <lineage>
        <taxon>Bacteria</taxon>
        <taxon>Pseudomonadati</taxon>
        <taxon>Pseudomonadota</taxon>
        <taxon>Gammaproteobacteria</taxon>
        <taxon>Lysobacterales</taxon>
        <taxon>Lysobacteraceae</taxon>
        <taxon>Xanthomonas</taxon>
    </lineage>
</organism>
<protein>
    <recommendedName>
        <fullName evidence="1">Holliday junction branch migration complex subunit RuvB</fullName>
        <ecNumber evidence="1">3.6.4.-</ecNumber>
    </recommendedName>
</protein>
<comment type="function">
    <text evidence="1">The RuvA-RuvB-RuvC complex processes Holliday junction (HJ) DNA during genetic recombination and DNA repair, while the RuvA-RuvB complex plays an important role in the rescue of blocked DNA replication forks via replication fork reversal (RFR). RuvA specifically binds to HJ cruciform DNA, conferring on it an open structure. The RuvB hexamer acts as an ATP-dependent pump, pulling dsDNA into and through the RuvAB complex. RuvB forms 2 homohexamers on either side of HJ DNA bound by 1 or 2 RuvA tetramers; 4 subunits per hexamer contact DNA at a time. Coordinated motions by a converter formed by DNA-disengaged RuvB subunits stimulates ATP hydrolysis and nucleotide exchange. Immobilization of the converter enables RuvB to convert the ATP-contained energy into a lever motion, pulling 2 nucleotides of DNA out of the RuvA tetramer per ATP hydrolyzed, thus driving DNA branch migration. The RuvB motors rotate together with the DNA substrate, which together with the progressing nucleotide cycle form the mechanistic basis for DNA recombination by continuous HJ branch migration. Branch migration allows RuvC to scan DNA until it finds its consensus sequence, where it cleaves and resolves cruciform DNA.</text>
</comment>
<comment type="catalytic activity">
    <reaction evidence="1">
        <text>ATP + H2O = ADP + phosphate + H(+)</text>
        <dbReference type="Rhea" id="RHEA:13065"/>
        <dbReference type="ChEBI" id="CHEBI:15377"/>
        <dbReference type="ChEBI" id="CHEBI:15378"/>
        <dbReference type="ChEBI" id="CHEBI:30616"/>
        <dbReference type="ChEBI" id="CHEBI:43474"/>
        <dbReference type="ChEBI" id="CHEBI:456216"/>
    </reaction>
</comment>
<comment type="subunit">
    <text evidence="1">Homohexamer. Forms an RuvA(8)-RuvB(12)-Holliday junction (HJ) complex. HJ DNA is sandwiched between 2 RuvA tetramers; dsDNA enters through RuvA and exits via RuvB. An RuvB hexamer assembles on each DNA strand where it exits the tetramer. Each RuvB hexamer is contacted by two RuvA subunits (via domain III) on 2 adjacent RuvB subunits; this complex drives branch migration. In the full resolvosome a probable DNA-RuvA(4)-RuvB(12)-RuvC(2) complex forms which resolves the HJ.</text>
</comment>
<comment type="subcellular location">
    <subcellularLocation>
        <location evidence="1">Cytoplasm</location>
    </subcellularLocation>
</comment>
<comment type="domain">
    <text evidence="1">Has 3 domains, the large (RuvB-L) and small ATPase (RuvB-S) domains and the C-terminal head (RuvB-H) domain. The head domain binds DNA, while the ATPase domains jointly bind ATP, ADP or are empty depending on the state of the subunit in the translocation cycle. During a single DNA translocation step the structure of each domain remains the same, but their relative positions change.</text>
</comment>
<comment type="similarity">
    <text evidence="1">Belongs to the RuvB family.</text>
</comment>
<keyword id="KW-0067">ATP-binding</keyword>
<keyword id="KW-0963">Cytoplasm</keyword>
<keyword id="KW-0227">DNA damage</keyword>
<keyword id="KW-0233">DNA recombination</keyword>
<keyword id="KW-0234">DNA repair</keyword>
<keyword id="KW-0238">DNA-binding</keyword>
<keyword id="KW-0378">Hydrolase</keyword>
<keyword id="KW-0547">Nucleotide-binding</keyword>
<keyword id="KW-1185">Reference proteome</keyword>
<gene>
    <name evidence="1" type="primary">ruvB</name>
    <name type="ordered locus">XOO1663</name>
</gene>